<organism>
    <name type="scientific">Pyrococcus abyssi (strain GE5 / Orsay)</name>
    <dbReference type="NCBI Taxonomy" id="272844"/>
    <lineage>
        <taxon>Archaea</taxon>
        <taxon>Methanobacteriati</taxon>
        <taxon>Methanobacteriota</taxon>
        <taxon>Thermococci</taxon>
        <taxon>Thermococcales</taxon>
        <taxon>Thermococcaceae</taxon>
        <taxon>Pyrococcus</taxon>
    </lineage>
</organism>
<feature type="chain" id="PRO_0000138264" description="CTP synthase">
    <location>
        <begin position="1"/>
        <end position="537"/>
    </location>
</feature>
<feature type="domain" description="Glutamine amidotransferase type-1" evidence="1">
    <location>
        <begin position="290"/>
        <end position="532"/>
    </location>
</feature>
<feature type="region of interest" description="Amidoligase domain" evidence="1">
    <location>
        <begin position="1"/>
        <end position="265"/>
    </location>
</feature>
<feature type="active site" description="Nucleophile; for glutamine hydrolysis" evidence="1">
    <location>
        <position position="378"/>
    </location>
</feature>
<feature type="active site" evidence="1">
    <location>
        <position position="505"/>
    </location>
</feature>
<feature type="active site" evidence="1">
    <location>
        <position position="507"/>
    </location>
</feature>
<feature type="binding site" evidence="1">
    <location>
        <position position="13"/>
    </location>
    <ligand>
        <name>CTP</name>
        <dbReference type="ChEBI" id="CHEBI:37563"/>
        <note>allosteric inhibitor</note>
    </ligand>
</feature>
<feature type="binding site" evidence="1">
    <location>
        <position position="13"/>
    </location>
    <ligand>
        <name>UTP</name>
        <dbReference type="ChEBI" id="CHEBI:46398"/>
    </ligand>
</feature>
<feature type="binding site" evidence="1">
    <location>
        <begin position="14"/>
        <end position="19"/>
    </location>
    <ligand>
        <name>ATP</name>
        <dbReference type="ChEBI" id="CHEBI:30616"/>
    </ligand>
</feature>
<feature type="binding site" evidence="1">
    <location>
        <position position="54"/>
    </location>
    <ligand>
        <name>L-glutamine</name>
        <dbReference type="ChEBI" id="CHEBI:58359"/>
    </ligand>
</feature>
<feature type="binding site" evidence="1">
    <location>
        <position position="71"/>
    </location>
    <ligand>
        <name>ATP</name>
        <dbReference type="ChEBI" id="CHEBI:30616"/>
    </ligand>
</feature>
<feature type="binding site" evidence="1">
    <location>
        <position position="71"/>
    </location>
    <ligand>
        <name>Mg(2+)</name>
        <dbReference type="ChEBI" id="CHEBI:18420"/>
    </ligand>
</feature>
<feature type="binding site" evidence="1">
    <location>
        <position position="139"/>
    </location>
    <ligand>
        <name>Mg(2+)</name>
        <dbReference type="ChEBI" id="CHEBI:18420"/>
    </ligand>
</feature>
<feature type="binding site" evidence="1">
    <location>
        <begin position="146"/>
        <end position="148"/>
    </location>
    <ligand>
        <name>CTP</name>
        <dbReference type="ChEBI" id="CHEBI:37563"/>
        <note>allosteric inhibitor</note>
    </ligand>
</feature>
<feature type="binding site" evidence="1">
    <location>
        <begin position="186"/>
        <end position="191"/>
    </location>
    <ligand>
        <name>CTP</name>
        <dbReference type="ChEBI" id="CHEBI:37563"/>
        <note>allosteric inhibitor</note>
    </ligand>
</feature>
<feature type="binding site" evidence="1">
    <location>
        <begin position="186"/>
        <end position="191"/>
    </location>
    <ligand>
        <name>UTP</name>
        <dbReference type="ChEBI" id="CHEBI:46398"/>
    </ligand>
</feature>
<feature type="binding site" evidence="1">
    <location>
        <position position="222"/>
    </location>
    <ligand>
        <name>CTP</name>
        <dbReference type="ChEBI" id="CHEBI:37563"/>
        <note>allosteric inhibitor</note>
    </ligand>
</feature>
<feature type="binding site" evidence="1">
    <location>
        <position position="222"/>
    </location>
    <ligand>
        <name>UTP</name>
        <dbReference type="ChEBI" id="CHEBI:46398"/>
    </ligand>
</feature>
<feature type="binding site" evidence="1">
    <location>
        <position position="351"/>
    </location>
    <ligand>
        <name>L-glutamine</name>
        <dbReference type="ChEBI" id="CHEBI:58359"/>
    </ligand>
</feature>
<feature type="binding site" evidence="1">
    <location>
        <begin position="379"/>
        <end position="382"/>
    </location>
    <ligand>
        <name>L-glutamine</name>
        <dbReference type="ChEBI" id="CHEBI:58359"/>
    </ligand>
</feature>
<feature type="binding site" evidence="1">
    <location>
        <position position="402"/>
    </location>
    <ligand>
        <name>L-glutamine</name>
        <dbReference type="ChEBI" id="CHEBI:58359"/>
    </ligand>
</feature>
<feature type="binding site" evidence="1">
    <location>
        <position position="459"/>
    </location>
    <ligand>
        <name>L-glutamine</name>
        <dbReference type="ChEBI" id="CHEBI:58359"/>
    </ligand>
</feature>
<evidence type="ECO:0000255" key="1">
    <source>
        <dbReference type="HAMAP-Rule" id="MF_01227"/>
    </source>
</evidence>
<keyword id="KW-0067">ATP-binding</keyword>
<keyword id="KW-0315">Glutamine amidotransferase</keyword>
<keyword id="KW-0436">Ligase</keyword>
<keyword id="KW-0460">Magnesium</keyword>
<keyword id="KW-0479">Metal-binding</keyword>
<keyword id="KW-0547">Nucleotide-binding</keyword>
<keyword id="KW-0665">Pyrimidine biosynthesis</keyword>
<proteinExistence type="inferred from homology"/>
<dbReference type="EC" id="6.3.4.2" evidence="1"/>
<dbReference type="EMBL" id="AJ248284">
    <property type="protein sequence ID" value="CAB49277.1"/>
    <property type="molecule type" value="Genomic_DNA"/>
</dbReference>
<dbReference type="EMBL" id="HE613800">
    <property type="protein sequence ID" value="CCE69732.1"/>
    <property type="molecule type" value="Genomic_DNA"/>
</dbReference>
<dbReference type="PIR" id="F75149">
    <property type="entry name" value="F75149"/>
</dbReference>
<dbReference type="RefSeq" id="WP_010867477.1">
    <property type="nucleotide sequence ID" value="NC_000868.1"/>
</dbReference>
<dbReference type="SMR" id="Q9V1S2"/>
<dbReference type="STRING" id="272844.PAB0231"/>
<dbReference type="MEROPS" id="C26.964"/>
<dbReference type="KEGG" id="pab:PAB0231"/>
<dbReference type="PATRIC" id="fig|272844.11.peg.376"/>
<dbReference type="eggNOG" id="arCOG00063">
    <property type="taxonomic scope" value="Archaea"/>
</dbReference>
<dbReference type="HOGENOM" id="CLU_011675_5_0_2"/>
<dbReference type="OrthoDB" id="52769at2157"/>
<dbReference type="PhylomeDB" id="Q9V1S2"/>
<dbReference type="UniPathway" id="UPA00159">
    <property type="reaction ID" value="UER00277"/>
</dbReference>
<dbReference type="Proteomes" id="UP000000810">
    <property type="component" value="Chromosome"/>
</dbReference>
<dbReference type="Proteomes" id="UP000009139">
    <property type="component" value="Chromosome"/>
</dbReference>
<dbReference type="GO" id="GO:0005524">
    <property type="term" value="F:ATP binding"/>
    <property type="evidence" value="ECO:0007669"/>
    <property type="project" value="UniProtKB-KW"/>
</dbReference>
<dbReference type="GO" id="GO:0003883">
    <property type="term" value="F:CTP synthase activity"/>
    <property type="evidence" value="ECO:0007669"/>
    <property type="project" value="UniProtKB-UniRule"/>
</dbReference>
<dbReference type="GO" id="GO:0004359">
    <property type="term" value="F:glutaminase activity"/>
    <property type="evidence" value="ECO:0007669"/>
    <property type="project" value="RHEA"/>
</dbReference>
<dbReference type="GO" id="GO:0042802">
    <property type="term" value="F:identical protein binding"/>
    <property type="evidence" value="ECO:0007669"/>
    <property type="project" value="TreeGrafter"/>
</dbReference>
<dbReference type="GO" id="GO:0046872">
    <property type="term" value="F:metal ion binding"/>
    <property type="evidence" value="ECO:0007669"/>
    <property type="project" value="UniProtKB-KW"/>
</dbReference>
<dbReference type="GO" id="GO:0044210">
    <property type="term" value="P:'de novo' CTP biosynthetic process"/>
    <property type="evidence" value="ECO:0007669"/>
    <property type="project" value="UniProtKB-UniRule"/>
</dbReference>
<dbReference type="GO" id="GO:0019856">
    <property type="term" value="P:pyrimidine nucleobase biosynthetic process"/>
    <property type="evidence" value="ECO:0007669"/>
    <property type="project" value="TreeGrafter"/>
</dbReference>
<dbReference type="CDD" id="cd03113">
    <property type="entry name" value="CTPS_N"/>
    <property type="match status" value="1"/>
</dbReference>
<dbReference type="CDD" id="cd01746">
    <property type="entry name" value="GATase1_CTP_Synthase"/>
    <property type="match status" value="1"/>
</dbReference>
<dbReference type="FunFam" id="3.40.50.300:FF:000009">
    <property type="entry name" value="CTP synthase"/>
    <property type="match status" value="1"/>
</dbReference>
<dbReference type="FunFam" id="3.40.50.880:FF:000002">
    <property type="entry name" value="CTP synthase"/>
    <property type="match status" value="1"/>
</dbReference>
<dbReference type="Gene3D" id="3.40.50.880">
    <property type="match status" value="1"/>
</dbReference>
<dbReference type="Gene3D" id="3.40.50.300">
    <property type="entry name" value="P-loop containing nucleotide triphosphate hydrolases"/>
    <property type="match status" value="1"/>
</dbReference>
<dbReference type="HAMAP" id="MF_01227">
    <property type="entry name" value="PyrG"/>
    <property type="match status" value="1"/>
</dbReference>
<dbReference type="InterPro" id="IPR029062">
    <property type="entry name" value="Class_I_gatase-like"/>
</dbReference>
<dbReference type="InterPro" id="IPR004468">
    <property type="entry name" value="CTP_synthase"/>
</dbReference>
<dbReference type="InterPro" id="IPR017456">
    <property type="entry name" value="CTP_synthase_N"/>
</dbReference>
<dbReference type="InterPro" id="IPR017926">
    <property type="entry name" value="GATASE"/>
</dbReference>
<dbReference type="InterPro" id="IPR033828">
    <property type="entry name" value="GATase1_CTP_Synthase"/>
</dbReference>
<dbReference type="InterPro" id="IPR027417">
    <property type="entry name" value="P-loop_NTPase"/>
</dbReference>
<dbReference type="NCBIfam" id="NF003792">
    <property type="entry name" value="PRK05380.1"/>
    <property type="match status" value="1"/>
</dbReference>
<dbReference type="NCBIfam" id="TIGR00337">
    <property type="entry name" value="PyrG"/>
    <property type="match status" value="1"/>
</dbReference>
<dbReference type="PANTHER" id="PTHR11550">
    <property type="entry name" value="CTP SYNTHASE"/>
    <property type="match status" value="1"/>
</dbReference>
<dbReference type="PANTHER" id="PTHR11550:SF0">
    <property type="entry name" value="CTP SYNTHASE-RELATED"/>
    <property type="match status" value="1"/>
</dbReference>
<dbReference type="Pfam" id="PF06418">
    <property type="entry name" value="CTP_synth_N"/>
    <property type="match status" value="1"/>
</dbReference>
<dbReference type="Pfam" id="PF00117">
    <property type="entry name" value="GATase"/>
    <property type="match status" value="1"/>
</dbReference>
<dbReference type="SUPFAM" id="SSF52317">
    <property type="entry name" value="Class I glutamine amidotransferase-like"/>
    <property type="match status" value="1"/>
</dbReference>
<dbReference type="SUPFAM" id="SSF52540">
    <property type="entry name" value="P-loop containing nucleoside triphosphate hydrolases"/>
    <property type="match status" value="1"/>
</dbReference>
<dbReference type="PROSITE" id="PS51273">
    <property type="entry name" value="GATASE_TYPE_1"/>
    <property type="match status" value="1"/>
</dbReference>
<accession>Q9V1S2</accession>
<accession>G8ZHY9</accession>
<gene>
    <name evidence="1" type="primary">pyrG</name>
    <name type="ordered locus">PYRAB03550</name>
    <name type="ORF">PAB0231</name>
</gene>
<reference key="1">
    <citation type="journal article" date="2003" name="Mol. Microbiol.">
        <title>An integrated analysis of the genome of the hyperthermophilic archaeon Pyrococcus abyssi.</title>
        <authorList>
            <person name="Cohen G.N."/>
            <person name="Barbe V."/>
            <person name="Flament D."/>
            <person name="Galperin M."/>
            <person name="Heilig R."/>
            <person name="Lecompte O."/>
            <person name="Poch O."/>
            <person name="Prieur D."/>
            <person name="Querellou J."/>
            <person name="Ripp R."/>
            <person name="Thierry J.-C."/>
            <person name="Van der Oost J."/>
            <person name="Weissenbach J."/>
            <person name="Zivanovic Y."/>
            <person name="Forterre P."/>
        </authorList>
    </citation>
    <scope>NUCLEOTIDE SEQUENCE [LARGE SCALE GENOMIC DNA]</scope>
    <source>
        <strain>GE5 / Orsay</strain>
    </source>
</reference>
<reference key="2">
    <citation type="journal article" date="2012" name="Curr. Microbiol.">
        <title>Re-annotation of two hyperthermophilic archaea Pyrococcus abyssi GE5 and Pyrococcus furiosus DSM 3638.</title>
        <authorList>
            <person name="Gao J."/>
            <person name="Wang J."/>
        </authorList>
    </citation>
    <scope>GENOME REANNOTATION</scope>
    <source>
        <strain>GE5 / Orsay</strain>
    </source>
</reference>
<comment type="function">
    <text evidence="1">Catalyzes the ATP-dependent amination of UTP to CTP with either L-glutamine or ammonia as the source of nitrogen. Regulates intracellular CTP levels through interactions with the four ribonucleotide triphosphates.</text>
</comment>
<comment type="catalytic activity">
    <reaction evidence="1">
        <text>UTP + L-glutamine + ATP + H2O = CTP + L-glutamate + ADP + phosphate + 2 H(+)</text>
        <dbReference type="Rhea" id="RHEA:26426"/>
        <dbReference type="ChEBI" id="CHEBI:15377"/>
        <dbReference type="ChEBI" id="CHEBI:15378"/>
        <dbReference type="ChEBI" id="CHEBI:29985"/>
        <dbReference type="ChEBI" id="CHEBI:30616"/>
        <dbReference type="ChEBI" id="CHEBI:37563"/>
        <dbReference type="ChEBI" id="CHEBI:43474"/>
        <dbReference type="ChEBI" id="CHEBI:46398"/>
        <dbReference type="ChEBI" id="CHEBI:58359"/>
        <dbReference type="ChEBI" id="CHEBI:456216"/>
        <dbReference type="EC" id="6.3.4.2"/>
    </reaction>
</comment>
<comment type="catalytic activity">
    <reaction evidence="1">
        <text>L-glutamine + H2O = L-glutamate + NH4(+)</text>
        <dbReference type="Rhea" id="RHEA:15889"/>
        <dbReference type="ChEBI" id="CHEBI:15377"/>
        <dbReference type="ChEBI" id="CHEBI:28938"/>
        <dbReference type="ChEBI" id="CHEBI:29985"/>
        <dbReference type="ChEBI" id="CHEBI:58359"/>
    </reaction>
</comment>
<comment type="catalytic activity">
    <reaction evidence="1">
        <text>UTP + NH4(+) + ATP = CTP + ADP + phosphate + 2 H(+)</text>
        <dbReference type="Rhea" id="RHEA:16597"/>
        <dbReference type="ChEBI" id="CHEBI:15378"/>
        <dbReference type="ChEBI" id="CHEBI:28938"/>
        <dbReference type="ChEBI" id="CHEBI:30616"/>
        <dbReference type="ChEBI" id="CHEBI:37563"/>
        <dbReference type="ChEBI" id="CHEBI:43474"/>
        <dbReference type="ChEBI" id="CHEBI:46398"/>
        <dbReference type="ChEBI" id="CHEBI:456216"/>
    </reaction>
</comment>
<comment type="activity regulation">
    <text evidence="1">Allosterically activated by GTP, when glutamine is the substrate; GTP has no effect on the reaction when ammonia is the substrate. The allosteric effector GTP functions by stabilizing the protein conformation that binds the tetrahedral intermediate(s) formed during glutamine hydrolysis. Inhibited by the product CTP, via allosteric rather than competitive inhibition.</text>
</comment>
<comment type="pathway">
    <text evidence="1">Pyrimidine metabolism; CTP biosynthesis via de novo pathway; CTP from UDP: step 2/2.</text>
</comment>
<comment type="subunit">
    <text evidence="1">Homotetramer.</text>
</comment>
<comment type="miscellaneous">
    <text evidence="1">CTPSs have evolved a hybrid strategy for distinguishing between UTP and CTP. The overlapping regions of the product feedback inhibitory and substrate sites recognize a common feature in both compounds, the triphosphate moiety. To differentiate isosteric substrate and product pyrimidine rings, an additional pocket far from the expected kinase/ligase catalytic site, specifically recognizes the cytosine and ribose portions of the product inhibitor.</text>
</comment>
<comment type="similarity">
    <text evidence="1">Belongs to the CTP synthase family.</text>
</comment>
<name>PYRG_PYRAB</name>
<sequence length="537" mass="60587">MTKFIFVTGGVVSGLGKGITSASIGLLMKARGYKTTNIKIDPYINYDAGTMNPYQHGEVFVLDDGGEVDLDLGNYERFLDTSLTFDHNITTGKVYSTVIEKERRGEYLGATVQVIPHITDEIKRRIREIARNYDIVVVEIGGTVGDIESMPFLEAARQMQLEEGRENVAFVHVTYVPKLRVVGEQKTKPTQHSVKELRSLGIQPDAIVARSEDPLEEGARKKISLFTNVPEEAVISAYDVEDTYEVPLLLEREGLGKYLVKRLGLEDREPDLREWEKMVAKYKALQDSVEIAIVGKYVKLTDSYLSIKEALKHASVSNEVKVKIRWIEAEDIEEHGTKLLEGVDGIIVPGGFGARGAEGKIMTIRYARENDIPFLGICFGFQLTVVEFARNVLGMKGAHSTEIDPQTPYPVVDLMPEQRNLDKLGGTMRLGAYPVKIKKGTLAYELYKKDLVYERHRHRWEVNPDYIEAFEKAGLVFSGIAGDDERRMEILELPDKRYFIATQFHPEFKSRPMKPAPVFHGLVKAAKEYKQEKDATH</sequence>
<protein>
    <recommendedName>
        <fullName evidence="1">CTP synthase</fullName>
        <ecNumber evidence="1">6.3.4.2</ecNumber>
    </recommendedName>
    <alternativeName>
        <fullName evidence="1">Cytidine 5'-triphosphate synthase</fullName>
    </alternativeName>
    <alternativeName>
        <fullName evidence="1">Cytidine triphosphate synthetase</fullName>
        <shortName evidence="1">CTP synthetase</shortName>
        <shortName evidence="1">CTPS</shortName>
    </alternativeName>
    <alternativeName>
        <fullName evidence="1">UTP--ammonia ligase</fullName>
    </alternativeName>
</protein>